<gene>
    <name type="primary">Lyrm9</name>
</gene>
<reference key="1">
    <citation type="journal article" date="2005" name="Science">
        <title>The transcriptional landscape of the mammalian genome.</title>
        <authorList>
            <person name="Carninci P."/>
            <person name="Kasukawa T."/>
            <person name="Katayama S."/>
            <person name="Gough J."/>
            <person name="Frith M.C."/>
            <person name="Maeda N."/>
            <person name="Oyama R."/>
            <person name="Ravasi T."/>
            <person name="Lenhard B."/>
            <person name="Wells C."/>
            <person name="Kodzius R."/>
            <person name="Shimokawa K."/>
            <person name="Bajic V.B."/>
            <person name="Brenner S.E."/>
            <person name="Batalov S."/>
            <person name="Forrest A.R."/>
            <person name="Zavolan M."/>
            <person name="Davis M.J."/>
            <person name="Wilming L.G."/>
            <person name="Aidinis V."/>
            <person name="Allen J.E."/>
            <person name="Ambesi-Impiombato A."/>
            <person name="Apweiler R."/>
            <person name="Aturaliya R.N."/>
            <person name="Bailey T.L."/>
            <person name="Bansal M."/>
            <person name="Baxter L."/>
            <person name="Beisel K.W."/>
            <person name="Bersano T."/>
            <person name="Bono H."/>
            <person name="Chalk A.M."/>
            <person name="Chiu K.P."/>
            <person name="Choudhary V."/>
            <person name="Christoffels A."/>
            <person name="Clutterbuck D.R."/>
            <person name="Crowe M.L."/>
            <person name="Dalla E."/>
            <person name="Dalrymple B.P."/>
            <person name="de Bono B."/>
            <person name="Della Gatta G."/>
            <person name="di Bernardo D."/>
            <person name="Down T."/>
            <person name="Engstrom P."/>
            <person name="Fagiolini M."/>
            <person name="Faulkner G."/>
            <person name="Fletcher C.F."/>
            <person name="Fukushima T."/>
            <person name="Furuno M."/>
            <person name="Futaki S."/>
            <person name="Gariboldi M."/>
            <person name="Georgii-Hemming P."/>
            <person name="Gingeras T.R."/>
            <person name="Gojobori T."/>
            <person name="Green R.E."/>
            <person name="Gustincich S."/>
            <person name="Harbers M."/>
            <person name="Hayashi Y."/>
            <person name="Hensch T.K."/>
            <person name="Hirokawa N."/>
            <person name="Hill D."/>
            <person name="Huminiecki L."/>
            <person name="Iacono M."/>
            <person name="Ikeo K."/>
            <person name="Iwama A."/>
            <person name="Ishikawa T."/>
            <person name="Jakt M."/>
            <person name="Kanapin A."/>
            <person name="Katoh M."/>
            <person name="Kawasawa Y."/>
            <person name="Kelso J."/>
            <person name="Kitamura H."/>
            <person name="Kitano H."/>
            <person name="Kollias G."/>
            <person name="Krishnan S.P."/>
            <person name="Kruger A."/>
            <person name="Kummerfeld S.K."/>
            <person name="Kurochkin I.V."/>
            <person name="Lareau L.F."/>
            <person name="Lazarevic D."/>
            <person name="Lipovich L."/>
            <person name="Liu J."/>
            <person name="Liuni S."/>
            <person name="McWilliam S."/>
            <person name="Madan Babu M."/>
            <person name="Madera M."/>
            <person name="Marchionni L."/>
            <person name="Matsuda H."/>
            <person name="Matsuzawa S."/>
            <person name="Miki H."/>
            <person name="Mignone F."/>
            <person name="Miyake S."/>
            <person name="Morris K."/>
            <person name="Mottagui-Tabar S."/>
            <person name="Mulder N."/>
            <person name="Nakano N."/>
            <person name="Nakauchi H."/>
            <person name="Ng P."/>
            <person name="Nilsson R."/>
            <person name="Nishiguchi S."/>
            <person name="Nishikawa S."/>
            <person name="Nori F."/>
            <person name="Ohara O."/>
            <person name="Okazaki Y."/>
            <person name="Orlando V."/>
            <person name="Pang K.C."/>
            <person name="Pavan W.J."/>
            <person name="Pavesi G."/>
            <person name="Pesole G."/>
            <person name="Petrovsky N."/>
            <person name="Piazza S."/>
            <person name="Reed J."/>
            <person name="Reid J.F."/>
            <person name="Ring B.Z."/>
            <person name="Ringwald M."/>
            <person name="Rost B."/>
            <person name="Ruan Y."/>
            <person name="Salzberg S.L."/>
            <person name="Sandelin A."/>
            <person name="Schneider C."/>
            <person name="Schoenbach C."/>
            <person name="Sekiguchi K."/>
            <person name="Semple C.A."/>
            <person name="Seno S."/>
            <person name="Sessa L."/>
            <person name="Sheng Y."/>
            <person name="Shibata Y."/>
            <person name="Shimada H."/>
            <person name="Shimada K."/>
            <person name="Silva D."/>
            <person name="Sinclair B."/>
            <person name="Sperling S."/>
            <person name="Stupka E."/>
            <person name="Sugiura K."/>
            <person name="Sultana R."/>
            <person name="Takenaka Y."/>
            <person name="Taki K."/>
            <person name="Tammoja K."/>
            <person name="Tan S.L."/>
            <person name="Tang S."/>
            <person name="Taylor M.S."/>
            <person name="Tegner J."/>
            <person name="Teichmann S.A."/>
            <person name="Ueda H.R."/>
            <person name="van Nimwegen E."/>
            <person name="Verardo R."/>
            <person name="Wei C.L."/>
            <person name="Yagi K."/>
            <person name="Yamanishi H."/>
            <person name="Zabarovsky E."/>
            <person name="Zhu S."/>
            <person name="Zimmer A."/>
            <person name="Hide W."/>
            <person name="Bult C."/>
            <person name="Grimmond S.M."/>
            <person name="Teasdale R.D."/>
            <person name="Liu E.T."/>
            <person name="Brusic V."/>
            <person name="Quackenbush J."/>
            <person name="Wahlestedt C."/>
            <person name="Mattick J.S."/>
            <person name="Hume D.A."/>
            <person name="Kai C."/>
            <person name="Sasaki D."/>
            <person name="Tomaru Y."/>
            <person name="Fukuda S."/>
            <person name="Kanamori-Katayama M."/>
            <person name="Suzuki M."/>
            <person name="Aoki J."/>
            <person name="Arakawa T."/>
            <person name="Iida J."/>
            <person name="Imamura K."/>
            <person name="Itoh M."/>
            <person name="Kato T."/>
            <person name="Kawaji H."/>
            <person name="Kawagashira N."/>
            <person name="Kawashima T."/>
            <person name="Kojima M."/>
            <person name="Kondo S."/>
            <person name="Konno H."/>
            <person name="Nakano K."/>
            <person name="Ninomiya N."/>
            <person name="Nishio T."/>
            <person name="Okada M."/>
            <person name="Plessy C."/>
            <person name="Shibata K."/>
            <person name="Shiraki T."/>
            <person name="Suzuki S."/>
            <person name="Tagami M."/>
            <person name="Waki K."/>
            <person name="Watahiki A."/>
            <person name="Okamura-Oho Y."/>
            <person name="Suzuki H."/>
            <person name="Kawai J."/>
            <person name="Hayashizaki Y."/>
        </authorList>
    </citation>
    <scope>NUCLEOTIDE SEQUENCE [LARGE SCALE MRNA]</scope>
    <source>
        <strain>C57BL/6J</strain>
        <tissue>Diencephalon</tissue>
    </source>
</reference>
<reference key="2">
    <citation type="journal article" date="2004" name="Genome Res.">
        <title>The status, quality, and expansion of the NIH full-length cDNA project: the Mammalian Gene Collection (MGC).</title>
        <authorList>
            <consortium name="The MGC Project Team"/>
        </authorList>
    </citation>
    <scope>NUCLEOTIDE SEQUENCE [LARGE SCALE MRNA]</scope>
</reference>
<sequence>MAPLPGAELVQTPLQLYRYLLRCCRQLPTKGIQEHYKHAVRQSFQVHSDEDNSERIQQIIKRAIEDADWIMNKYRKQN</sequence>
<feature type="chain" id="PRO_0000345399" description="LYR motif-containing protein 9">
    <location>
        <begin position="1"/>
        <end position="78"/>
    </location>
</feature>
<feature type="sequence conflict" description="In Ref. 2; AAI30225." evidence="1" ref="2">
    <original>I</original>
    <variation>T</variation>
    <location>
        <position position="60"/>
    </location>
</feature>
<protein>
    <recommendedName>
        <fullName>LYR motif-containing protein 9</fullName>
    </recommendedName>
</protein>
<dbReference type="EMBL" id="AK144380">
    <property type="protein sequence ID" value="BAE25857.1"/>
    <property type="molecule type" value="mRNA"/>
</dbReference>
<dbReference type="EMBL" id="BC130224">
    <property type="protein sequence ID" value="AAI30225.1"/>
    <property type="molecule type" value="mRNA"/>
</dbReference>
<dbReference type="CCDS" id="CCDS36240.1"/>
<dbReference type="RefSeq" id="NP_001070149.1">
    <property type="nucleotide sequence ID" value="NM_001076681.3"/>
</dbReference>
<dbReference type="SMR" id="Q3UN90"/>
<dbReference type="FunCoup" id="Q3UN90">
    <property type="interactions" value="4"/>
</dbReference>
<dbReference type="STRING" id="10090.ENSMUSP00000127853"/>
<dbReference type="iPTMnet" id="Q3UN90"/>
<dbReference type="PhosphoSitePlus" id="Q3UN90"/>
<dbReference type="PaxDb" id="10090-ENSMUSP00000127853"/>
<dbReference type="ProteomicsDB" id="292152"/>
<dbReference type="Pumba" id="Q3UN90"/>
<dbReference type="Ensembl" id="ENSMUST00000147875.9">
    <property type="protein sequence ID" value="ENSMUSP00000127853.2"/>
    <property type="gene ID" value="ENSMUSG00000072640.12"/>
</dbReference>
<dbReference type="GeneID" id="66274"/>
<dbReference type="KEGG" id="mmu:66274"/>
<dbReference type="UCSC" id="uc007kkb.2">
    <property type="organism name" value="mouse"/>
</dbReference>
<dbReference type="AGR" id="MGI:1913524"/>
<dbReference type="CTD" id="201229"/>
<dbReference type="MGI" id="MGI:1913524">
    <property type="gene designation" value="Lyrm9"/>
</dbReference>
<dbReference type="VEuPathDB" id="HostDB:ENSMUSG00000072640"/>
<dbReference type="eggNOG" id="ENOG502S9QI">
    <property type="taxonomic scope" value="Eukaryota"/>
</dbReference>
<dbReference type="GeneTree" id="ENSGT00390000002625"/>
<dbReference type="HOGENOM" id="CLU_183410_0_0_1"/>
<dbReference type="InParanoid" id="Q3UN90"/>
<dbReference type="OMA" id="HYKHHVR"/>
<dbReference type="OrthoDB" id="75572at9989"/>
<dbReference type="PhylomeDB" id="Q3UN90"/>
<dbReference type="TreeFam" id="TF335914"/>
<dbReference type="BioGRID-ORCS" id="66274">
    <property type="hits" value="4 hits in 75 CRISPR screens"/>
</dbReference>
<dbReference type="ChiTaRS" id="Lyrm9">
    <property type="organism name" value="mouse"/>
</dbReference>
<dbReference type="PRO" id="PR:Q3UN90"/>
<dbReference type="Proteomes" id="UP000000589">
    <property type="component" value="Chromosome 11"/>
</dbReference>
<dbReference type="RNAct" id="Q3UN90">
    <property type="molecule type" value="protein"/>
</dbReference>
<dbReference type="Bgee" id="ENSMUSG00000072640">
    <property type="expression patterns" value="Expressed in rostral migratory stream and 222 other cell types or tissues"/>
</dbReference>
<dbReference type="ExpressionAtlas" id="Q3UN90">
    <property type="expression patterns" value="baseline and differential"/>
</dbReference>
<dbReference type="CDD" id="cd20269">
    <property type="entry name" value="Complex1_LYR_LYRM9"/>
    <property type="match status" value="1"/>
</dbReference>
<dbReference type="InterPro" id="IPR008011">
    <property type="entry name" value="Complex1_LYR_dom"/>
</dbReference>
<dbReference type="InterPro" id="IPR045291">
    <property type="entry name" value="Complex1_LYR_LYRM9"/>
</dbReference>
<dbReference type="InterPro" id="IPR052151">
    <property type="entry name" value="Complex_I_LYR"/>
</dbReference>
<dbReference type="PANTHER" id="PTHR47061">
    <property type="entry name" value="LYR MOTIF-CONTAINING PROTEIN 9"/>
    <property type="match status" value="1"/>
</dbReference>
<dbReference type="PANTHER" id="PTHR47061:SF1">
    <property type="entry name" value="LYR MOTIF-CONTAINING PROTEIN 9"/>
    <property type="match status" value="1"/>
</dbReference>
<dbReference type="Pfam" id="PF05347">
    <property type="entry name" value="Complex1_LYR"/>
    <property type="match status" value="1"/>
</dbReference>
<organism>
    <name type="scientific">Mus musculus</name>
    <name type="common">Mouse</name>
    <dbReference type="NCBI Taxonomy" id="10090"/>
    <lineage>
        <taxon>Eukaryota</taxon>
        <taxon>Metazoa</taxon>
        <taxon>Chordata</taxon>
        <taxon>Craniata</taxon>
        <taxon>Vertebrata</taxon>
        <taxon>Euteleostomi</taxon>
        <taxon>Mammalia</taxon>
        <taxon>Eutheria</taxon>
        <taxon>Euarchontoglires</taxon>
        <taxon>Glires</taxon>
        <taxon>Rodentia</taxon>
        <taxon>Myomorpha</taxon>
        <taxon>Muroidea</taxon>
        <taxon>Muridae</taxon>
        <taxon>Murinae</taxon>
        <taxon>Mus</taxon>
        <taxon>Mus</taxon>
    </lineage>
</organism>
<name>LYRM9_MOUSE</name>
<accession>Q3UN90</accession>
<accession>A1L3P7</accession>
<evidence type="ECO:0000305" key="1"/>
<proteinExistence type="inferred from homology"/>
<keyword id="KW-1185">Reference proteome</keyword>
<comment type="similarity">
    <text evidence="1">Belongs to the complex I LYR family. LYRM9 subfamily.</text>
</comment>